<name>LPXD_AERHH</name>
<keyword id="KW-0012">Acyltransferase</keyword>
<keyword id="KW-0441">Lipid A biosynthesis</keyword>
<keyword id="KW-0444">Lipid biosynthesis</keyword>
<keyword id="KW-0443">Lipid metabolism</keyword>
<keyword id="KW-1185">Reference proteome</keyword>
<keyword id="KW-0677">Repeat</keyword>
<keyword id="KW-0808">Transferase</keyword>
<evidence type="ECO:0000255" key="1">
    <source>
        <dbReference type="HAMAP-Rule" id="MF_00523"/>
    </source>
</evidence>
<reference key="1">
    <citation type="journal article" date="2006" name="J. Bacteriol.">
        <title>Genome sequence of Aeromonas hydrophila ATCC 7966T: jack of all trades.</title>
        <authorList>
            <person name="Seshadri R."/>
            <person name="Joseph S.W."/>
            <person name="Chopra A.K."/>
            <person name="Sha J."/>
            <person name="Shaw J."/>
            <person name="Graf J."/>
            <person name="Haft D.H."/>
            <person name="Wu M."/>
            <person name="Ren Q."/>
            <person name="Rosovitz M.J."/>
            <person name="Madupu R."/>
            <person name="Tallon L."/>
            <person name="Kim M."/>
            <person name="Jin S."/>
            <person name="Vuong H."/>
            <person name="Stine O.C."/>
            <person name="Ali A."/>
            <person name="Horneman A.J."/>
            <person name="Heidelberg J.F."/>
        </authorList>
    </citation>
    <scope>NUCLEOTIDE SEQUENCE [LARGE SCALE GENOMIC DNA]</scope>
    <source>
        <strain>ATCC 7966 / DSM 30187 / BCRC 13018 / CCUG 14551 / JCM 1027 / KCTC 2358 / NCIMB 9240 / NCTC 8049</strain>
    </source>
</reference>
<comment type="function">
    <text evidence="1">Catalyzes the N-acylation of UDP-3-O-acylglucosamine using 3-hydroxyacyl-ACP as the acyl donor. Is involved in the biosynthesis of lipid A, a phosphorylated glycolipid that anchors the lipopolysaccharide to the outer membrane of the cell.</text>
</comment>
<comment type="catalytic activity">
    <reaction evidence="1">
        <text>a UDP-3-O-[(3R)-3-hydroxyacyl]-alpha-D-glucosamine + a (3R)-hydroxyacyl-[ACP] = a UDP-2-N,3-O-bis[(3R)-3-hydroxyacyl]-alpha-D-glucosamine + holo-[ACP] + H(+)</text>
        <dbReference type="Rhea" id="RHEA:53836"/>
        <dbReference type="Rhea" id="RHEA-COMP:9685"/>
        <dbReference type="Rhea" id="RHEA-COMP:9945"/>
        <dbReference type="ChEBI" id="CHEBI:15378"/>
        <dbReference type="ChEBI" id="CHEBI:64479"/>
        <dbReference type="ChEBI" id="CHEBI:78827"/>
        <dbReference type="ChEBI" id="CHEBI:137740"/>
        <dbReference type="ChEBI" id="CHEBI:137748"/>
        <dbReference type="EC" id="2.3.1.191"/>
    </reaction>
</comment>
<comment type="pathway">
    <text evidence="1">Bacterial outer membrane biogenesis; LPS lipid A biosynthesis.</text>
</comment>
<comment type="subunit">
    <text evidence="1">Homotrimer.</text>
</comment>
<comment type="similarity">
    <text evidence="1">Belongs to the transferase hexapeptide repeat family. LpxD subfamily.</text>
</comment>
<protein>
    <recommendedName>
        <fullName evidence="1">UDP-3-O-acylglucosamine N-acyltransferase</fullName>
        <ecNumber evidence="1">2.3.1.191</ecNumber>
    </recommendedName>
</protein>
<organism>
    <name type="scientific">Aeromonas hydrophila subsp. hydrophila (strain ATCC 7966 / DSM 30187 / BCRC 13018 / CCUG 14551 / JCM 1027 / KCTC 2358 / NCIMB 9240 / NCTC 8049)</name>
    <dbReference type="NCBI Taxonomy" id="380703"/>
    <lineage>
        <taxon>Bacteria</taxon>
        <taxon>Pseudomonadati</taxon>
        <taxon>Pseudomonadota</taxon>
        <taxon>Gammaproteobacteria</taxon>
        <taxon>Aeromonadales</taxon>
        <taxon>Aeromonadaceae</taxon>
        <taxon>Aeromonas</taxon>
    </lineage>
</organism>
<gene>
    <name evidence="1" type="primary">lpxD</name>
    <name type="ordered locus">AHA_1183</name>
</gene>
<feature type="chain" id="PRO_1000050922" description="UDP-3-O-acylglucosamine N-acyltransferase">
    <location>
        <begin position="1"/>
        <end position="339"/>
    </location>
</feature>
<feature type="active site" description="Proton acceptor" evidence="1">
    <location>
        <position position="238"/>
    </location>
</feature>
<proteinExistence type="inferred from homology"/>
<dbReference type="EC" id="2.3.1.191" evidence="1"/>
<dbReference type="EMBL" id="CP000462">
    <property type="protein sequence ID" value="ABK39604.1"/>
    <property type="molecule type" value="Genomic_DNA"/>
</dbReference>
<dbReference type="RefSeq" id="WP_011705102.1">
    <property type="nucleotide sequence ID" value="NC_008570.1"/>
</dbReference>
<dbReference type="RefSeq" id="YP_855724.1">
    <property type="nucleotide sequence ID" value="NC_008570.1"/>
</dbReference>
<dbReference type="SMR" id="A0KHH3"/>
<dbReference type="STRING" id="380703.AHA_1183"/>
<dbReference type="EnsemblBacteria" id="ABK39604">
    <property type="protein sequence ID" value="ABK39604"/>
    <property type="gene ID" value="AHA_1183"/>
</dbReference>
<dbReference type="GeneID" id="4487258"/>
<dbReference type="KEGG" id="aha:AHA_1183"/>
<dbReference type="PATRIC" id="fig|380703.7.peg.1190"/>
<dbReference type="eggNOG" id="COG1044">
    <property type="taxonomic scope" value="Bacteria"/>
</dbReference>
<dbReference type="HOGENOM" id="CLU_049865_0_1_6"/>
<dbReference type="OrthoDB" id="9784739at2"/>
<dbReference type="UniPathway" id="UPA00973"/>
<dbReference type="Proteomes" id="UP000000756">
    <property type="component" value="Chromosome"/>
</dbReference>
<dbReference type="GO" id="GO:0016020">
    <property type="term" value="C:membrane"/>
    <property type="evidence" value="ECO:0007669"/>
    <property type="project" value="GOC"/>
</dbReference>
<dbReference type="GO" id="GO:0016410">
    <property type="term" value="F:N-acyltransferase activity"/>
    <property type="evidence" value="ECO:0007669"/>
    <property type="project" value="InterPro"/>
</dbReference>
<dbReference type="GO" id="GO:0009245">
    <property type="term" value="P:lipid A biosynthetic process"/>
    <property type="evidence" value="ECO:0007669"/>
    <property type="project" value="UniProtKB-UniRule"/>
</dbReference>
<dbReference type="CDD" id="cd03352">
    <property type="entry name" value="LbH_LpxD"/>
    <property type="match status" value="1"/>
</dbReference>
<dbReference type="FunFam" id="2.160.10.10:FF:000005">
    <property type="entry name" value="UDP-3-O-(3-hydroxymyristoyl)glucosamine N-acyltransferase"/>
    <property type="match status" value="1"/>
</dbReference>
<dbReference type="Gene3D" id="1.20.5.170">
    <property type="match status" value="1"/>
</dbReference>
<dbReference type="Gene3D" id="2.160.10.10">
    <property type="entry name" value="Hexapeptide repeat proteins"/>
    <property type="match status" value="1"/>
</dbReference>
<dbReference type="Gene3D" id="3.40.1390.10">
    <property type="entry name" value="MurE/MurF, N-terminal domain"/>
    <property type="match status" value="1"/>
</dbReference>
<dbReference type="HAMAP" id="MF_00523">
    <property type="entry name" value="LpxD"/>
    <property type="match status" value="1"/>
</dbReference>
<dbReference type="InterPro" id="IPR001451">
    <property type="entry name" value="Hexapep"/>
</dbReference>
<dbReference type="InterPro" id="IPR018357">
    <property type="entry name" value="Hexapep_transf_CS"/>
</dbReference>
<dbReference type="InterPro" id="IPR007691">
    <property type="entry name" value="LpxD"/>
</dbReference>
<dbReference type="InterPro" id="IPR011004">
    <property type="entry name" value="Trimer_LpxA-like_sf"/>
</dbReference>
<dbReference type="InterPro" id="IPR020573">
    <property type="entry name" value="UDP_GlcNAc_AcTrfase_non-rep"/>
</dbReference>
<dbReference type="NCBIfam" id="TIGR01853">
    <property type="entry name" value="lipid_A_lpxD"/>
    <property type="match status" value="1"/>
</dbReference>
<dbReference type="NCBIfam" id="NF002060">
    <property type="entry name" value="PRK00892.1"/>
    <property type="match status" value="1"/>
</dbReference>
<dbReference type="PANTHER" id="PTHR43378">
    <property type="entry name" value="UDP-3-O-ACYLGLUCOSAMINE N-ACYLTRANSFERASE"/>
    <property type="match status" value="1"/>
</dbReference>
<dbReference type="PANTHER" id="PTHR43378:SF2">
    <property type="entry name" value="UDP-3-O-ACYLGLUCOSAMINE N-ACYLTRANSFERASE 1, MITOCHONDRIAL-RELATED"/>
    <property type="match status" value="1"/>
</dbReference>
<dbReference type="Pfam" id="PF00132">
    <property type="entry name" value="Hexapep"/>
    <property type="match status" value="1"/>
</dbReference>
<dbReference type="Pfam" id="PF04613">
    <property type="entry name" value="LpxD"/>
    <property type="match status" value="1"/>
</dbReference>
<dbReference type="SUPFAM" id="SSF51161">
    <property type="entry name" value="Trimeric LpxA-like enzymes"/>
    <property type="match status" value="1"/>
</dbReference>
<dbReference type="PROSITE" id="PS00101">
    <property type="entry name" value="HEXAPEP_TRANSFERASES"/>
    <property type="match status" value="2"/>
</dbReference>
<accession>A0KHH3</accession>
<sequence length="339" mass="36339">MAFTLAQLAQQLGAQVHGDGTLEIRKVATLEKAGEGDITFLSNKKYRHYLEQSKATAVLITEADLPFCPTNALVLKDPYVGFARVAQLLDTTPQPATDIHPSAVIAADVQLGERVAIGANAVIESGVVLGDDVRIGPGCFVGKNTRLGARSRLWANVTLYHNITMGTDCLVQSGTVIGADGFGYANERGEWIKIPQLGGVTIGNRVEIGACTTIDRGALEDTRIADNVIIDNQCQIAHNVEIGYGTAVAGSTVMAGSLKVGKYCIIGGASVFNGHMEICDQATVTGMAMVMRPITEPGVYSSGIPLQTNKEWRKTAARVMRIEEMHKRLSKLEKKLDQE</sequence>